<gene>
    <name evidence="1" type="primary">dnaJ</name>
    <name type="ordered locus">XF_2339</name>
</gene>
<evidence type="ECO:0000255" key="1">
    <source>
        <dbReference type="HAMAP-Rule" id="MF_01152"/>
    </source>
</evidence>
<name>DNAJ_XYLFA</name>
<organism>
    <name type="scientific">Xylella fastidiosa (strain 9a5c)</name>
    <dbReference type="NCBI Taxonomy" id="160492"/>
    <lineage>
        <taxon>Bacteria</taxon>
        <taxon>Pseudomonadati</taxon>
        <taxon>Pseudomonadota</taxon>
        <taxon>Gammaproteobacteria</taxon>
        <taxon>Lysobacterales</taxon>
        <taxon>Lysobacteraceae</taxon>
        <taxon>Xylella</taxon>
    </lineage>
</organism>
<comment type="function">
    <text evidence="1">Participates actively in the response to hyperosmotic and heat shock by preventing the aggregation of stress-denatured proteins and by disaggregating proteins, also in an autonomous, DnaK-independent fashion. Unfolded proteins bind initially to DnaJ; upon interaction with the DnaJ-bound protein, DnaK hydrolyzes its bound ATP, resulting in the formation of a stable complex. GrpE releases ADP from DnaK; ATP binding to DnaK triggers the release of the substrate protein, thus completing the reaction cycle. Several rounds of ATP-dependent interactions between DnaJ, DnaK and GrpE are required for fully efficient folding. Also involved, together with DnaK and GrpE, in the DNA replication of plasmids through activation of initiation proteins.</text>
</comment>
<comment type="cofactor">
    <cofactor evidence="1">
        <name>Zn(2+)</name>
        <dbReference type="ChEBI" id="CHEBI:29105"/>
    </cofactor>
    <text evidence="1">Binds 2 Zn(2+) ions per monomer.</text>
</comment>
<comment type="subunit">
    <text evidence="1">Homodimer.</text>
</comment>
<comment type="subcellular location">
    <subcellularLocation>
        <location evidence="1">Cytoplasm</location>
    </subcellularLocation>
</comment>
<comment type="domain">
    <text evidence="1">The J domain is necessary and sufficient to stimulate DnaK ATPase activity. Zinc center 1 plays an important role in the autonomous, DnaK-independent chaperone activity of DnaJ. Zinc center 2 is essential for interaction with DnaK and for DnaJ activity.</text>
</comment>
<comment type="similarity">
    <text evidence="1">Belongs to the DnaJ family.</text>
</comment>
<accession>Q9PB06</accession>
<reference key="1">
    <citation type="journal article" date="2000" name="Nature">
        <title>The genome sequence of the plant pathogen Xylella fastidiosa.</title>
        <authorList>
            <person name="Simpson A.J.G."/>
            <person name="Reinach F.C."/>
            <person name="Arruda P."/>
            <person name="Abreu F.A."/>
            <person name="Acencio M."/>
            <person name="Alvarenga R."/>
            <person name="Alves L.M.C."/>
            <person name="Araya J.E."/>
            <person name="Baia G.S."/>
            <person name="Baptista C.S."/>
            <person name="Barros M.H."/>
            <person name="Bonaccorsi E.D."/>
            <person name="Bordin S."/>
            <person name="Bove J.M."/>
            <person name="Briones M.R.S."/>
            <person name="Bueno M.R.P."/>
            <person name="Camargo A.A."/>
            <person name="Camargo L.E.A."/>
            <person name="Carraro D.M."/>
            <person name="Carrer H."/>
            <person name="Colauto N.B."/>
            <person name="Colombo C."/>
            <person name="Costa F.F."/>
            <person name="Costa M.C.R."/>
            <person name="Costa-Neto C.M."/>
            <person name="Coutinho L.L."/>
            <person name="Cristofani M."/>
            <person name="Dias-Neto E."/>
            <person name="Docena C."/>
            <person name="El-Dorry H."/>
            <person name="Facincani A.P."/>
            <person name="Ferreira A.J.S."/>
            <person name="Ferreira V.C.A."/>
            <person name="Ferro J.A."/>
            <person name="Fraga J.S."/>
            <person name="Franca S.C."/>
            <person name="Franco M.C."/>
            <person name="Frohme M."/>
            <person name="Furlan L.R."/>
            <person name="Garnier M."/>
            <person name="Goldman G.H."/>
            <person name="Goldman M.H.S."/>
            <person name="Gomes S.L."/>
            <person name="Gruber A."/>
            <person name="Ho P.L."/>
            <person name="Hoheisel J.D."/>
            <person name="Junqueira M.L."/>
            <person name="Kemper E.L."/>
            <person name="Kitajima J.P."/>
            <person name="Krieger J.E."/>
            <person name="Kuramae E.E."/>
            <person name="Laigret F."/>
            <person name="Lambais M.R."/>
            <person name="Leite L.C.C."/>
            <person name="Lemos E.G.M."/>
            <person name="Lemos M.V.F."/>
            <person name="Lopes S.A."/>
            <person name="Lopes C.R."/>
            <person name="Machado J.A."/>
            <person name="Machado M.A."/>
            <person name="Madeira A.M.B.N."/>
            <person name="Madeira H.M.F."/>
            <person name="Marino C.L."/>
            <person name="Marques M.V."/>
            <person name="Martins E.A.L."/>
            <person name="Martins E.M.F."/>
            <person name="Matsukuma A.Y."/>
            <person name="Menck C.F.M."/>
            <person name="Miracca E.C."/>
            <person name="Miyaki C.Y."/>
            <person name="Monteiro-Vitorello C.B."/>
            <person name="Moon D.H."/>
            <person name="Nagai M.A."/>
            <person name="Nascimento A.L.T.O."/>
            <person name="Netto L.E.S."/>
            <person name="Nhani A. Jr."/>
            <person name="Nobrega F.G."/>
            <person name="Nunes L.R."/>
            <person name="Oliveira M.A."/>
            <person name="de Oliveira M.C."/>
            <person name="de Oliveira R.C."/>
            <person name="Palmieri D.A."/>
            <person name="Paris A."/>
            <person name="Peixoto B.R."/>
            <person name="Pereira G.A.G."/>
            <person name="Pereira H.A. Jr."/>
            <person name="Pesquero J.B."/>
            <person name="Quaggio R.B."/>
            <person name="Roberto P.G."/>
            <person name="Rodrigues V."/>
            <person name="de Rosa A.J.M."/>
            <person name="de Rosa V.E. Jr."/>
            <person name="de Sa R.G."/>
            <person name="Santelli R.V."/>
            <person name="Sawasaki H.E."/>
            <person name="da Silva A.C.R."/>
            <person name="da Silva A.M."/>
            <person name="da Silva F.R."/>
            <person name="Silva W.A. Jr."/>
            <person name="da Silveira J.F."/>
            <person name="Silvestri M.L.Z."/>
            <person name="Siqueira W.J."/>
            <person name="de Souza A.A."/>
            <person name="de Souza A.P."/>
            <person name="Terenzi M.F."/>
            <person name="Truffi D."/>
            <person name="Tsai S.M."/>
            <person name="Tsuhako M.H."/>
            <person name="Vallada H."/>
            <person name="Van Sluys M.A."/>
            <person name="Verjovski-Almeida S."/>
            <person name="Vettore A.L."/>
            <person name="Zago M.A."/>
            <person name="Zatz M."/>
            <person name="Meidanis J."/>
            <person name="Setubal J.C."/>
        </authorList>
    </citation>
    <scope>NUCLEOTIDE SEQUENCE [LARGE SCALE GENOMIC DNA]</scope>
    <source>
        <strain>9a5c</strain>
    </source>
</reference>
<feature type="chain" id="PRO_0000070940" description="Chaperone protein DnaJ">
    <location>
        <begin position="1"/>
        <end position="368"/>
    </location>
</feature>
<feature type="domain" description="J" evidence="1">
    <location>
        <begin position="5"/>
        <end position="70"/>
    </location>
</feature>
<feature type="repeat" description="CXXCXGXG motif">
    <location>
        <begin position="137"/>
        <end position="144"/>
    </location>
</feature>
<feature type="repeat" description="CXXCXGXG motif">
    <location>
        <begin position="153"/>
        <end position="160"/>
    </location>
</feature>
<feature type="repeat" description="CXXCXGXG motif">
    <location>
        <begin position="175"/>
        <end position="182"/>
    </location>
</feature>
<feature type="repeat" description="CXXCXGXG motif">
    <location>
        <begin position="189"/>
        <end position="196"/>
    </location>
</feature>
<feature type="zinc finger region" description="CR-type" evidence="1">
    <location>
        <begin position="124"/>
        <end position="201"/>
    </location>
</feature>
<feature type="binding site" evidence="1">
    <location>
        <position position="137"/>
    </location>
    <ligand>
        <name>Zn(2+)</name>
        <dbReference type="ChEBI" id="CHEBI:29105"/>
        <label>1</label>
    </ligand>
</feature>
<feature type="binding site" evidence="1">
    <location>
        <position position="140"/>
    </location>
    <ligand>
        <name>Zn(2+)</name>
        <dbReference type="ChEBI" id="CHEBI:29105"/>
        <label>1</label>
    </ligand>
</feature>
<feature type="binding site" evidence="1">
    <location>
        <position position="153"/>
    </location>
    <ligand>
        <name>Zn(2+)</name>
        <dbReference type="ChEBI" id="CHEBI:29105"/>
        <label>2</label>
    </ligand>
</feature>
<feature type="binding site" evidence="1">
    <location>
        <position position="156"/>
    </location>
    <ligand>
        <name>Zn(2+)</name>
        <dbReference type="ChEBI" id="CHEBI:29105"/>
        <label>2</label>
    </ligand>
</feature>
<feature type="binding site" evidence="1">
    <location>
        <position position="175"/>
    </location>
    <ligand>
        <name>Zn(2+)</name>
        <dbReference type="ChEBI" id="CHEBI:29105"/>
        <label>2</label>
    </ligand>
</feature>
<feature type="binding site" evidence="1">
    <location>
        <position position="178"/>
    </location>
    <ligand>
        <name>Zn(2+)</name>
        <dbReference type="ChEBI" id="CHEBI:29105"/>
        <label>2</label>
    </ligand>
</feature>
<feature type="binding site" evidence="1">
    <location>
        <position position="189"/>
    </location>
    <ligand>
        <name>Zn(2+)</name>
        <dbReference type="ChEBI" id="CHEBI:29105"/>
        <label>1</label>
    </ligand>
</feature>
<feature type="binding site" evidence="1">
    <location>
        <position position="192"/>
    </location>
    <ligand>
        <name>Zn(2+)</name>
        <dbReference type="ChEBI" id="CHEBI:29105"/>
        <label>1</label>
    </ligand>
</feature>
<protein>
    <recommendedName>
        <fullName evidence="1">Chaperone protein DnaJ</fullName>
    </recommendedName>
</protein>
<proteinExistence type="inferred from homology"/>
<keyword id="KW-0143">Chaperone</keyword>
<keyword id="KW-0963">Cytoplasm</keyword>
<keyword id="KW-0235">DNA replication</keyword>
<keyword id="KW-0479">Metal-binding</keyword>
<keyword id="KW-0677">Repeat</keyword>
<keyword id="KW-0346">Stress response</keyword>
<keyword id="KW-0862">Zinc</keyword>
<keyword id="KW-0863">Zinc-finger</keyword>
<sequence>MSKRDYYQVLGVPRTASEDDLKKAYRRCAMKYHPDRNPGDAAAEAAFKECKEAYEVLADTKKRKLYDTHGHAAFEHGVGGGNAPDMNDIFGDIFGNIFGGARASRRGADVGYMVELDLEEAVAGVERQIQIPTLVECTHCHGSGSEDGHVETCGTCRGSGQVRIQRGIFAMQQTCPHCGGRGVIIRNPCKVCNGAGRVEDHKTLSVKIPAGVDNGDRIRLSGEGEQGPEGVPPGDLYVEVRVREHPIFQRDGDDLHCEVPVRISQAALGDIVRVATLDGEAEIRIPAETQSGKLFRLRGKGVRSVRSRTEGDLYCRIVVETPVNLTAEQRKLLEQFEMTFAGEDARKHSPKSATFLDGVKSFWDRMTS</sequence>
<dbReference type="EMBL" id="AE003849">
    <property type="protein sequence ID" value="AAF85138.1"/>
    <property type="molecule type" value="Genomic_DNA"/>
</dbReference>
<dbReference type="PIR" id="F82570">
    <property type="entry name" value="F82570"/>
</dbReference>
<dbReference type="RefSeq" id="WP_010894785.1">
    <property type="nucleotide sequence ID" value="NC_002488.3"/>
</dbReference>
<dbReference type="SMR" id="Q9PB06"/>
<dbReference type="STRING" id="160492.XF_2339"/>
<dbReference type="KEGG" id="xfa:XF_2339"/>
<dbReference type="eggNOG" id="COG0484">
    <property type="taxonomic scope" value="Bacteria"/>
</dbReference>
<dbReference type="HOGENOM" id="CLU_017633_0_7_6"/>
<dbReference type="Proteomes" id="UP000000812">
    <property type="component" value="Chromosome"/>
</dbReference>
<dbReference type="GO" id="GO:0005737">
    <property type="term" value="C:cytoplasm"/>
    <property type="evidence" value="ECO:0007669"/>
    <property type="project" value="UniProtKB-SubCell"/>
</dbReference>
<dbReference type="GO" id="GO:0005524">
    <property type="term" value="F:ATP binding"/>
    <property type="evidence" value="ECO:0007669"/>
    <property type="project" value="InterPro"/>
</dbReference>
<dbReference type="GO" id="GO:0031072">
    <property type="term" value="F:heat shock protein binding"/>
    <property type="evidence" value="ECO:0007669"/>
    <property type="project" value="InterPro"/>
</dbReference>
<dbReference type="GO" id="GO:0051082">
    <property type="term" value="F:unfolded protein binding"/>
    <property type="evidence" value="ECO:0007669"/>
    <property type="project" value="UniProtKB-UniRule"/>
</dbReference>
<dbReference type="GO" id="GO:0008270">
    <property type="term" value="F:zinc ion binding"/>
    <property type="evidence" value="ECO:0007669"/>
    <property type="project" value="UniProtKB-UniRule"/>
</dbReference>
<dbReference type="GO" id="GO:0051085">
    <property type="term" value="P:chaperone cofactor-dependent protein refolding"/>
    <property type="evidence" value="ECO:0007669"/>
    <property type="project" value="TreeGrafter"/>
</dbReference>
<dbReference type="GO" id="GO:0006260">
    <property type="term" value="P:DNA replication"/>
    <property type="evidence" value="ECO:0007669"/>
    <property type="project" value="UniProtKB-KW"/>
</dbReference>
<dbReference type="GO" id="GO:0042026">
    <property type="term" value="P:protein refolding"/>
    <property type="evidence" value="ECO:0007669"/>
    <property type="project" value="TreeGrafter"/>
</dbReference>
<dbReference type="GO" id="GO:0009408">
    <property type="term" value="P:response to heat"/>
    <property type="evidence" value="ECO:0007669"/>
    <property type="project" value="InterPro"/>
</dbReference>
<dbReference type="CDD" id="cd06257">
    <property type="entry name" value="DnaJ"/>
    <property type="match status" value="1"/>
</dbReference>
<dbReference type="CDD" id="cd10747">
    <property type="entry name" value="DnaJ_C"/>
    <property type="match status" value="1"/>
</dbReference>
<dbReference type="CDD" id="cd10719">
    <property type="entry name" value="DnaJ_zf"/>
    <property type="match status" value="1"/>
</dbReference>
<dbReference type="FunFam" id="2.10.230.10:FF:000002">
    <property type="entry name" value="Molecular chaperone DnaJ"/>
    <property type="match status" value="1"/>
</dbReference>
<dbReference type="FunFam" id="2.60.260.20:FF:000004">
    <property type="entry name" value="Molecular chaperone DnaJ"/>
    <property type="match status" value="1"/>
</dbReference>
<dbReference type="Gene3D" id="1.10.287.110">
    <property type="entry name" value="DnaJ domain"/>
    <property type="match status" value="1"/>
</dbReference>
<dbReference type="Gene3D" id="2.10.230.10">
    <property type="entry name" value="Heat shock protein DnaJ, cysteine-rich domain"/>
    <property type="match status" value="1"/>
</dbReference>
<dbReference type="Gene3D" id="2.60.260.20">
    <property type="entry name" value="Urease metallochaperone UreE, N-terminal domain"/>
    <property type="match status" value="2"/>
</dbReference>
<dbReference type="HAMAP" id="MF_01152">
    <property type="entry name" value="DnaJ"/>
    <property type="match status" value="1"/>
</dbReference>
<dbReference type="InterPro" id="IPR012724">
    <property type="entry name" value="DnaJ"/>
</dbReference>
<dbReference type="InterPro" id="IPR002939">
    <property type="entry name" value="DnaJ_C"/>
</dbReference>
<dbReference type="InterPro" id="IPR001623">
    <property type="entry name" value="DnaJ_domain"/>
</dbReference>
<dbReference type="InterPro" id="IPR008971">
    <property type="entry name" value="HSP40/DnaJ_pept-bd"/>
</dbReference>
<dbReference type="InterPro" id="IPR001305">
    <property type="entry name" value="HSP_DnaJ_Cys-rich_dom"/>
</dbReference>
<dbReference type="InterPro" id="IPR036410">
    <property type="entry name" value="HSP_DnaJ_Cys-rich_dom_sf"/>
</dbReference>
<dbReference type="InterPro" id="IPR036869">
    <property type="entry name" value="J_dom_sf"/>
</dbReference>
<dbReference type="NCBIfam" id="TIGR02349">
    <property type="entry name" value="DnaJ_bact"/>
    <property type="match status" value="1"/>
</dbReference>
<dbReference type="NCBIfam" id="NF008035">
    <property type="entry name" value="PRK10767.1"/>
    <property type="match status" value="1"/>
</dbReference>
<dbReference type="PANTHER" id="PTHR43096:SF48">
    <property type="entry name" value="CHAPERONE PROTEIN DNAJ"/>
    <property type="match status" value="1"/>
</dbReference>
<dbReference type="PANTHER" id="PTHR43096">
    <property type="entry name" value="DNAJ HOMOLOG 1, MITOCHONDRIAL-RELATED"/>
    <property type="match status" value="1"/>
</dbReference>
<dbReference type="Pfam" id="PF00226">
    <property type="entry name" value="DnaJ"/>
    <property type="match status" value="1"/>
</dbReference>
<dbReference type="Pfam" id="PF01556">
    <property type="entry name" value="DnaJ_C"/>
    <property type="match status" value="1"/>
</dbReference>
<dbReference type="Pfam" id="PF00684">
    <property type="entry name" value="DnaJ_CXXCXGXG"/>
    <property type="match status" value="1"/>
</dbReference>
<dbReference type="PRINTS" id="PR00625">
    <property type="entry name" value="JDOMAIN"/>
</dbReference>
<dbReference type="SMART" id="SM00271">
    <property type="entry name" value="DnaJ"/>
    <property type="match status" value="1"/>
</dbReference>
<dbReference type="SUPFAM" id="SSF46565">
    <property type="entry name" value="Chaperone J-domain"/>
    <property type="match status" value="1"/>
</dbReference>
<dbReference type="SUPFAM" id="SSF57938">
    <property type="entry name" value="DnaJ/Hsp40 cysteine-rich domain"/>
    <property type="match status" value="1"/>
</dbReference>
<dbReference type="SUPFAM" id="SSF49493">
    <property type="entry name" value="HSP40/DnaJ peptide-binding domain"/>
    <property type="match status" value="2"/>
</dbReference>
<dbReference type="PROSITE" id="PS50076">
    <property type="entry name" value="DNAJ_2"/>
    <property type="match status" value="1"/>
</dbReference>
<dbReference type="PROSITE" id="PS51188">
    <property type="entry name" value="ZF_CR"/>
    <property type="match status" value="1"/>
</dbReference>